<comment type="catalytic activity">
    <reaction evidence="1">
        <text>tRNA(Gly) + glycine + ATP = glycyl-tRNA(Gly) + AMP + diphosphate</text>
        <dbReference type="Rhea" id="RHEA:16013"/>
        <dbReference type="Rhea" id="RHEA-COMP:9664"/>
        <dbReference type="Rhea" id="RHEA-COMP:9683"/>
        <dbReference type="ChEBI" id="CHEBI:30616"/>
        <dbReference type="ChEBI" id="CHEBI:33019"/>
        <dbReference type="ChEBI" id="CHEBI:57305"/>
        <dbReference type="ChEBI" id="CHEBI:78442"/>
        <dbReference type="ChEBI" id="CHEBI:78522"/>
        <dbReference type="ChEBI" id="CHEBI:456215"/>
        <dbReference type="EC" id="6.1.1.14"/>
    </reaction>
</comment>
<comment type="subunit">
    <text evidence="1">Tetramer of two alpha and two beta subunits.</text>
</comment>
<comment type="subcellular location">
    <subcellularLocation>
        <location evidence="1">Cytoplasm</location>
    </subcellularLocation>
</comment>
<comment type="similarity">
    <text evidence="1">Belongs to the class-II aminoacyl-tRNA synthetase family.</text>
</comment>
<feature type="chain" id="PRO_1000101365" description="Glycine--tRNA ligase beta subunit">
    <location>
        <begin position="1"/>
        <end position="672"/>
    </location>
</feature>
<protein>
    <recommendedName>
        <fullName evidence="1">Glycine--tRNA ligase beta subunit</fullName>
        <ecNumber evidence="1">6.1.1.14</ecNumber>
    </recommendedName>
    <alternativeName>
        <fullName evidence="1">Glycyl-tRNA synthetase beta subunit</fullName>
        <shortName evidence="1">GlyRS</shortName>
    </alternativeName>
</protein>
<evidence type="ECO:0000255" key="1">
    <source>
        <dbReference type="HAMAP-Rule" id="MF_00255"/>
    </source>
</evidence>
<gene>
    <name evidence="1" type="primary">glyS</name>
    <name type="ordered locus">TRQ2_0731</name>
</gene>
<name>SYGB_THESQ</name>
<keyword id="KW-0030">Aminoacyl-tRNA synthetase</keyword>
<keyword id="KW-0067">ATP-binding</keyword>
<keyword id="KW-0963">Cytoplasm</keyword>
<keyword id="KW-0436">Ligase</keyword>
<keyword id="KW-0547">Nucleotide-binding</keyword>
<keyword id="KW-0648">Protein biosynthesis</keyword>
<sequence>MRTALLEVGLEELPASEFHSILRQLEEKSAELLKAYRISSGSVEVFVGSRRFGVILNNLPERQEDFTEEKKGPPLNIAYDENGKPTRALEGFLRNNNASLENVVHREGYVYLSRVVEGKPVEEVLPDLFRDLVLGLNFRKPMRWGSGEHEYVRPVHWIVAMVDGRVLDLEIFGLRSSRISYGKRYHAGSIEIPDPERYYESLKKGFVISSHLERKKFVLEQIDEFEKRSGMKIERDEELIEEIVAITEYPRIVVGQFDRKYLELPEEIIVTAVKHHQRSFIAHKETLTNIFVAFQDGPQPPENVVKGYERVINARLEDARYYFQKDLETSLEKMNEKLKEIVFQEKLGTLYDKVERIKKISQRLCEDLKLPEMFTQKVLEAASICKADIASKVVYEFPELQGVMGRIYALREGINEEIATAIEDHYSEEPQTVIGSILGIADRIDTIVGNFAIGNVPTSSKDPYGLKSKADTIFRIIRKNEWDISLEELLTFASSLVKYHLSEELETFFAGRFYQFLINELGISFDVARAVNHLWKKPLRGILSAEALQEISEKPEFQDLFVGFERVHNITKNHDSTKFDGALFEKEEEKKLMNKFYEVKEKVLKALERLNYREALQYLIELKPYIDEYFDNVFVMVKRDDLRVNRLSFLKNIDELFMMVGDMTYLVKRSQV</sequence>
<accession>B1L9T5</accession>
<organism>
    <name type="scientific">Thermotoga sp. (strain RQ2)</name>
    <dbReference type="NCBI Taxonomy" id="126740"/>
    <lineage>
        <taxon>Bacteria</taxon>
        <taxon>Thermotogati</taxon>
        <taxon>Thermotogota</taxon>
        <taxon>Thermotogae</taxon>
        <taxon>Thermotogales</taxon>
        <taxon>Thermotogaceae</taxon>
        <taxon>Thermotoga</taxon>
    </lineage>
</organism>
<proteinExistence type="inferred from homology"/>
<dbReference type="EC" id="6.1.1.14" evidence="1"/>
<dbReference type="EMBL" id="CP000969">
    <property type="protein sequence ID" value="ACB09083.1"/>
    <property type="molecule type" value="Genomic_DNA"/>
</dbReference>
<dbReference type="RefSeq" id="WP_012310708.1">
    <property type="nucleotide sequence ID" value="NC_010483.1"/>
</dbReference>
<dbReference type="SMR" id="B1L9T5"/>
<dbReference type="KEGG" id="trq:TRQ2_0731"/>
<dbReference type="HOGENOM" id="CLU_007220_2_2_0"/>
<dbReference type="Proteomes" id="UP000001687">
    <property type="component" value="Chromosome"/>
</dbReference>
<dbReference type="GO" id="GO:0005829">
    <property type="term" value="C:cytosol"/>
    <property type="evidence" value="ECO:0007669"/>
    <property type="project" value="TreeGrafter"/>
</dbReference>
<dbReference type="GO" id="GO:0004814">
    <property type="term" value="F:arginine-tRNA ligase activity"/>
    <property type="evidence" value="ECO:0007669"/>
    <property type="project" value="InterPro"/>
</dbReference>
<dbReference type="GO" id="GO:0005524">
    <property type="term" value="F:ATP binding"/>
    <property type="evidence" value="ECO:0007669"/>
    <property type="project" value="UniProtKB-UniRule"/>
</dbReference>
<dbReference type="GO" id="GO:0004820">
    <property type="term" value="F:glycine-tRNA ligase activity"/>
    <property type="evidence" value="ECO:0007669"/>
    <property type="project" value="UniProtKB-UniRule"/>
</dbReference>
<dbReference type="GO" id="GO:0006420">
    <property type="term" value="P:arginyl-tRNA aminoacylation"/>
    <property type="evidence" value="ECO:0007669"/>
    <property type="project" value="InterPro"/>
</dbReference>
<dbReference type="GO" id="GO:0006426">
    <property type="term" value="P:glycyl-tRNA aminoacylation"/>
    <property type="evidence" value="ECO:0007669"/>
    <property type="project" value="UniProtKB-UniRule"/>
</dbReference>
<dbReference type="HAMAP" id="MF_00255">
    <property type="entry name" value="Gly_tRNA_synth_beta"/>
    <property type="match status" value="1"/>
</dbReference>
<dbReference type="InterPro" id="IPR008909">
    <property type="entry name" value="DALR_anticod-bd"/>
</dbReference>
<dbReference type="InterPro" id="IPR015944">
    <property type="entry name" value="Gly-tRNA-synth_bsu"/>
</dbReference>
<dbReference type="InterPro" id="IPR006194">
    <property type="entry name" value="Gly-tRNA-synth_heterodimer"/>
</dbReference>
<dbReference type="InterPro" id="IPR009080">
    <property type="entry name" value="tRNAsynth_Ia_anticodon-bd"/>
</dbReference>
<dbReference type="NCBIfam" id="TIGR00211">
    <property type="entry name" value="glyS"/>
    <property type="match status" value="1"/>
</dbReference>
<dbReference type="PANTHER" id="PTHR30075:SF2">
    <property type="entry name" value="GLYCINE--TRNA LIGASE, CHLOROPLASTIC_MITOCHONDRIAL 2"/>
    <property type="match status" value="1"/>
</dbReference>
<dbReference type="PANTHER" id="PTHR30075">
    <property type="entry name" value="GLYCYL-TRNA SYNTHETASE"/>
    <property type="match status" value="1"/>
</dbReference>
<dbReference type="Pfam" id="PF05746">
    <property type="entry name" value="DALR_1"/>
    <property type="match status" value="1"/>
</dbReference>
<dbReference type="Pfam" id="PF02092">
    <property type="entry name" value="tRNA_synt_2f"/>
    <property type="match status" value="1"/>
</dbReference>
<dbReference type="PRINTS" id="PR01045">
    <property type="entry name" value="TRNASYNTHGB"/>
</dbReference>
<dbReference type="SUPFAM" id="SSF47323">
    <property type="entry name" value="Anticodon-binding domain of a subclass of class I aminoacyl-tRNA synthetases"/>
    <property type="match status" value="1"/>
</dbReference>
<dbReference type="SUPFAM" id="SSF109604">
    <property type="entry name" value="HD-domain/PDEase-like"/>
    <property type="match status" value="1"/>
</dbReference>
<dbReference type="PROSITE" id="PS50861">
    <property type="entry name" value="AA_TRNA_LIGASE_II_GLYAB"/>
    <property type="match status" value="1"/>
</dbReference>
<reference key="1">
    <citation type="journal article" date="2011" name="J. Bacteriol.">
        <title>Genome sequence of Thermotoga sp. strain RQ2, a hyperthermophilic bacterium isolated from a geothermally heated region of the seafloor near Ribeira Quente, the Azores.</title>
        <authorList>
            <person name="Swithers K.S."/>
            <person name="DiPippo J.L."/>
            <person name="Bruce D.C."/>
            <person name="Detter C."/>
            <person name="Tapia R."/>
            <person name="Han S."/>
            <person name="Saunders E."/>
            <person name="Goodwin L.A."/>
            <person name="Han J."/>
            <person name="Woyke T."/>
            <person name="Pitluck S."/>
            <person name="Pennacchio L."/>
            <person name="Nolan M."/>
            <person name="Mikhailova N."/>
            <person name="Lykidis A."/>
            <person name="Land M.L."/>
            <person name="Brettin T."/>
            <person name="Stetter K.O."/>
            <person name="Nelson K.E."/>
            <person name="Gogarten J.P."/>
            <person name="Noll K.M."/>
        </authorList>
    </citation>
    <scope>NUCLEOTIDE SEQUENCE [LARGE SCALE GENOMIC DNA]</scope>
    <source>
        <strain>RQ2</strain>
    </source>
</reference>